<protein>
    <recommendedName>
        <fullName evidence="1">Small ribosomal subunit protein uS2</fullName>
    </recommendedName>
    <alternativeName>
        <fullName evidence="2">30S ribosomal protein S2</fullName>
    </alternativeName>
</protein>
<evidence type="ECO:0000255" key="1">
    <source>
        <dbReference type="HAMAP-Rule" id="MF_00291"/>
    </source>
</evidence>
<evidence type="ECO:0000305" key="2"/>
<name>RS2_HAEIG</name>
<accession>A5UI55</accession>
<proteinExistence type="inferred from homology"/>
<keyword id="KW-0687">Ribonucleoprotein</keyword>
<keyword id="KW-0689">Ribosomal protein</keyword>
<gene>
    <name evidence="1" type="primary">rpsB</name>
    <name type="ordered locus">CGSHiGG_08125</name>
</gene>
<feature type="chain" id="PRO_1000003972" description="Small ribosomal subunit protein uS2">
    <location>
        <begin position="1"/>
        <end position="240"/>
    </location>
</feature>
<reference key="1">
    <citation type="journal article" date="2007" name="Genome Biol.">
        <title>Characterization and modeling of the Haemophilus influenzae core and supragenomes based on the complete genomic sequences of Rd and 12 clinical nontypeable strains.</title>
        <authorList>
            <person name="Hogg J.S."/>
            <person name="Hu F.Z."/>
            <person name="Janto B."/>
            <person name="Boissy R."/>
            <person name="Hayes J."/>
            <person name="Keefe R."/>
            <person name="Post J.C."/>
            <person name="Ehrlich G.D."/>
        </authorList>
    </citation>
    <scope>NUCLEOTIDE SEQUENCE [LARGE SCALE GENOMIC DNA]</scope>
    <source>
        <strain>PittGG</strain>
    </source>
</reference>
<dbReference type="EMBL" id="CP000672">
    <property type="protein sequence ID" value="ABR00461.1"/>
    <property type="molecule type" value="Genomic_DNA"/>
</dbReference>
<dbReference type="SMR" id="A5UI55"/>
<dbReference type="KEGG" id="hiq:CGSHiGG_08125"/>
<dbReference type="HOGENOM" id="CLU_040318_1_2_6"/>
<dbReference type="Proteomes" id="UP000001990">
    <property type="component" value="Chromosome"/>
</dbReference>
<dbReference type="GO" id="GO:0022627">
    <property type="term" value="C:cytosolic small ribosomal subunit"/>
    <property type="evidence" value="ECO:0007669"/>
    <property type="project" value="TreeGrafter"/>
</dbReference>
<dbReference type="GO" id="GO:0003735">
    <property type="term" value="F:structural constituent of ribosome"/>
    <property type="evidence" value="ECO:0007669"/>
    <property type="project" value="InterPro"/>
</dbReference>
<dbReference type="GO" id="GO:0006412">
    <property type="term" value="P:translation"/>
    <property type="evidence" value="ECO:0007669"/>
    <property type="project" value="UniProtKB-UniRule"/>
</dbReference>
<dbReference type="CDD" id="cd01425">
    <property type="entry name" value="RPS2"/>
    <property type="match status" value="1"/>
</dbReference>
<dbReference type="FunFam" id="1.10.287.610:FF:000001">
    <property type="entry name" value="30S ribosomal protein S2"/>
    <property type="match status" value="1"/>
</dbReference>
<dbReference type="Gene3D" id="3.40.50.10490">
    <property type="entry name" value="Glucose-6-phosphate isomerase like protein, domain 1"/>
    <property type="match status" value="1"/>
</dbReference>
<dbReference type="Gene3D" id="1.10.287.610">
    <property type="entry name" value="Helix hairpin bin"/>
    <property type="match status" value="1"/>
</dbReference>
<dbReference type="HAMAP" id="MF_00291_B">
    <property type="entry name" value="Ribosomal_uS2_B"/>
    <property type="match status" value="1"/>
</dbReference>
<dbReference type="InterPro" id="IPR001865">
    <property type="entry name" value="Ribosomal_uS2"/>
</dbReference>
<dbReference type="InterPro" id="IPR005706">
    <property type="entry name" value="Ribosomal_uS2_bac/mit/plastid"/>
</dbReference>
<dbReference type="InterPro" id="IPR018130">
    <property type="entry name" value="Ribosomal_uS2_CS"/>
</dbReference>
<dbReference type="InterPro" id="IPR023591">
    <property type="entry name" value="Ribosomal_uS2_flav_dom_sf"/>
</dbReference>
<dbReference type="NCBIfam" id="TIGR01011">
    <property type="entry name" value="rpsB_bact"/>
    <property type="match status" value="1"/>
</dbReference>
<dbReference type="PANTHER" id="PTHR12534">
    <property type="entry name" value="30S RIBOSOMAL PROTEIN S2 PROKARYOTIC AND ORGANELLAR"/>
    <property type="match status" value="1"/>
</dbReference>
<dbReference type="PANTHER" id="PTHR12534:SF0">
    <property type="entry name" value="SMALL RIBOSOMAL SUBUNIT PROTEIN US2M"/>
    <property type="match status" value="1"/>
</dbReference>
<dbReference type="Pfam" id="PF00318">
    <property type="entry name" value="Ribosomal_S2"/>
    <property type="match status" value="1"/>
</dbReference>
<dbReference type="PRINTS" id="PR00395">
    <property type="entry name" value="RIBOSOMALS2"/>
</dbReference>
<dbReference type="SUPFAM" id="SSF52313">
    <property type="entry name" value="Ribosomal protein S2"/>
    <property type="match status" value="1"/>
</dbReference>
<dbReference type="PROSITE" id="PS00962">
    <property type="entry name" value="RIBOSOMAL_S2_1"/>
    <property type="match status" value="1"/>
</dbReference>
<dbReference type="PROSITE" id="PS00963">
    <property type="entry name" value="RIBOSOMAL_S2_2"/>
    <property type="match status" value="1"/>
</dbReference>
<organism>
    <name type="scientific">Haemophilus influenzae (strain PittGG)</name>
    <dbReference type="NCBI Taxonomy" id="374931"/>
    <lineage>
        <taxon>Bacteria</taxon>
        <taxon>Pseudomonadati</taxon>
        <taxon>Pseudomonadota</taxon>
        <taxon>Gammaproteobacteria</taxon>
        <taxon>Pasteurellales</taxon>
        <taxon>Pasteurellaceae</taxon>
        <taxon>Haemophilus</taxon>
    </lineage>
</organism>
<sequence length="240" mass="26264">MAQVSMRDMINAGVHFGHQTRYWNPQMKPFIFGARNGVHIINLEKTLPLFNEALAELTRIASNNGKVLFVGTKRAASEAVQAAALDCQQYYVNHRWLGGMLTNWKTVRQSIKRLKDLETQSQDGTFDKLTKKEALMRSREMEKLELSLGGIKDMGGLPDALFVIGADHEHIAVKEANNLGIPVFAIVDTNSTPAGVDFVIPGNDDATRAIQLYVSAAAAAVKEGRGNEAQVAEELAADAE</sequence>
<comment type="similarity">
    <text evidence="1">Belongs to the universal ribosomal protein uS2 family.</text>
</comment>